<accession>B5Z7F6</accession>
<name>CLPP_HELPG</name>
<feature type="chain" id="PRO_1000189647" description="ATP-dependent Clp protease proteolytic subunit">
    <location>
        <begin position="1"/>
        <end position="195"/>
    </location>
</feature>
<feature type="active site" description="Nucleophile" evidence="1">
    <location>
        <position position="98"/>
    </location>
</feature>
<feature type="active site" evidence="1">
    <location>
        <position position="123"/>
    </location>
</feature>
<evidence type="ECO:0000255" key="1">
    <source>
        <dbReference type="HAMAP-Rule" id="MF_00444"/>
    </source>
</evidence>
<proteinExistence type="inferred from homology"/>
<protein>
    <recommendedName>
        <fullName evidence="1">ATP-dependent Clp protease proteolytic subunit</fullName>
        <ecNumber evidence="1">3.4.21.92</ecNumber>
    </recommendedName>
    <alternativeName>
        <fullName evidence="1">Endopeptidase Clp</fullName>
    </alternativeName>
</protein>
<sequence length="195" mass="21395">MGYIPYVIENTDRGERSYDIYSRLLKDRIVLLSGEINDSVASSIVAQLLFLEAEDPEKDIGLYINSPGGVITSGLSIYDTMNFIRPDVSTICIGQAASMGAFLLSCGAKGKRFSLPHSRIMIHQPLGGAQGQASDIEIISNEILRLKGLMNSILAQNSGQSLEQIAKDTDRDFYMSAKEAKEYGLIDKVLQKNVK</sequence>
<dbReference type="EC" id="3.4.21.92" evidence="1"/>
<dbReference type="EMBL" id="CP001173">
    <property type="protein sequence ID" value="ACI27505.1"/>
    <property type="molecule type" value="Genomic_DNA"/>
</dbReference>
<dbReference type="RefSeq" id="WP_000540573.1">
    <property type="nucleotide sequence ID" value="NC_011333.1"/>
</dbReference>
<dbReference type="SMR" id="B5Z7F6"/>
<dbReference type="MEROPS" id="S14.001"/>
<dbReference type="KEGG" id="hpg:HPG27_750"/>
<dbReference type="HOGENOM" id="CLU_058707_3_2_7"/>
<dbReference type="Proteomes" id="UP000001735">
    <property type="component" value="Chromosome"/>
</dbReference>
<dbReference type="GO" id="GO:0005737">
    <property type="term" value="C:cytoplasm"/>
    <property type="evidence" value="ECO:0007669"/>
    <property type="project" value="UniProtKB-SubCell"/>
</dbReference>
<dbReference type="GO" id="GO:0009368">
    <property type="term" value="C:endopeptidase Clp complex"/>
    <property type="evidence" value="ECO:0007669"/>
    <property type="project" value="TreeGrafter"/>
</dbReference>
<dbReference type="GO" id="GO:0004176">
    <property type="term" value="F:ATP-dependent peptidase activity"/>
    <property type="evidence" value="ECO:0007669"/>
    <property type="project" value="InterPro"/>
</dbReference>
<dbReference type="GO" id="GO:0051117">
    <property type="term" value="F:ATPase binding"/>
    <property type="evidence" value="ECO:0007669"/>
    <property type="project" value="TreeGrafter"/>
</dbReference>
<dbReference type="GO" id="GO:0004252">
    <property type="term" value="F:serine-type endopeptidase activity"/>
    <property type="evidence" value="ECO:0007669"/>
    <property type="project" value="UniProtKB-UniRule"/>
</dbReference>
<dbReference type="GO" id="GO:0006515">
    <property type="term" value="P:protein quality control for misfolded or incompletely synthesized proteins"/>
    <property type="evidence" value="ECO:0007669"/>
    <property type="project" value="TreeGrafter"/>
</dbReference>
<dbReference type="CDD" id="cd07017">
    <property type="entry name" value="S14_ClpP_2"/>
    <property type="match status" value="1"/>
</dbReference>
<dbReference type="FunFam" id="3.90.226.10:FF:000001">
    <property type="entry name" value="ATP-dependent Clp protease proteolytic subunit"/>
    <property type="match status" value="1"/>
</dbReference>
<dbReference type="Gene3D" id="3.90.226.10">
    <property type="entry name" value="2-enoyl-CoA Hydratase, Chain A, domain 1"/>
    <property type="match status" value="1"/>
</dbReference>
<dbReference type="HAMAP" id="MF_00444">
    <property type="entry name" value="ClpP"/>
    <property type="match status" value="1"/>
</dbReference>
<dbReference type="InterPro" id="IPR001907">
    <property type="entry name" value="ClpP"/>
</dbReference>
<dbReference type="InterPro" id="IPR029045">
    <property type="entry name" value="ClpP/crotonase-like_dom_sf"/>
</dbReference>
<dbReference type="InterPro" id="IPR023562">
    <property type="entry name" value="ClpP/TepA"/>
</dbReference>
<dbReference type="InterPro" id="IPR033135">
    <property type="entry name" value="ClpP_His_AS"/>
</dbReference>
<dbReference type="InterPro" id="IPR018215">
    <property type="entry name" value="ClpP_Ser_AS"/>
</dbReference>
<dbReference type="NCBIfam" id="TIGR00493">
    <property type="entry name" value="clpP"/>
    <property type="match status" value="1"/>
</dbReference>
<dbReference type="NCBIfam" id="NF001368">
    <property type="entry name" value="PRK00277.1"/>
    <property type="match status" value="1"/>
</dbReference>
<dbReference type="NCBIfam" id="NF009205">
    <property type="entry name" value="PRK12553.1"/>
    <property type="match status" value="1"/>
</dbReference>
<dbReference type="PANTHER" id="PTHR10381">
    <property type="entry name" value="ATP-DEPENDENT CLP PROTEASE PROTEOLYTIC SUBUNIT"/>
    <property type="match status" value="1"/>
</dbReference>
<dbReference type="PANTHER" id="PTHR10381:SF70">
    <property type="entry name" value="ATP-DEPENDENT CLP PROTEASE PROTEOLYTIC SUBUNIT"/>
    <property type="match status" value="1"/>
</dbReference>
<dbReference type="Pfam" id="PF00574">
    <property type="entry name" value="CLP_protease"/>
    <property type="match status" value="1"/>
</dbReference>
<dbReference type="PRINTS" id="PR00127">
    <property type="entry name" value="CLPPROTEASEP"/>
</dbReference>
<dbReference type="SUPFAM" id="SSF52096">
    <property type="entry name" value="ClpP/crotonase"/>
    <property type="match status" value="1"/>
</dbReference>
<dbReference type="PROSITE" id="PS00382">
    <property type="entry name" value="CLP_PROTEASE_HIS"/>
    <property type="match status" value="1"/>
</dbReference>
<dbReference type="PROSITE" id="PS00381">
    <property type="entry name" value="CLP_PROTEASE_SER"/>
    <property type="match status" value="1"/>
</dbReference>
<reference key="1">
    <citation type="journal article" date="2009" name="J. Bacteriol.">
        <title>The complete genome sequence of Helicobacter pylori strain G27.</title>
        <authorList>
            <person name="Baltrus D.A."/>
            <person name="Amieva M.R."/>
            <person name="Covacci A."/>
            <person name="Lowe T.M."/>
            <person name="Merrell D.S."/>
            <person name="Ottemann K.M."/>
            <person name="Stein M."/>
            <person name="Salama N.R."/>
            <person name="Guillemin K."/>
        </authorList>
    </citation>
    <scope>NUCLEOTIDE SEQUENCE [LARGE SCALE GENOMIC DNA]</scope>
    <source>
        <strain>G27</strain>
    </source>
</reference>
<comment type="function">
    <text evidence="1">Cleaves peptides in various proteins in a process that requires ATP hydrolysis. Has a chymotrypsin-like activity. Plays a major role in the degradation of misfolded proteins.</text>
</comment>
<comment type="catalytic activity">
    <reaction evidence="1">
        <text>Hydrolysis of proteins to small peptides in the presence of ATP and magnesium. alpha-casein is the usual test substrate. In the absence of ATP, only oligopeptides shorter than five residues are hydrolyzed (such as succinyl-Leu-Tyr-|-NHMec, and Leu-Tyr-Leu-|-Tyr-Trp, in which cleavage of the -Tyr-|-Leu- and -Tyr-|-Trp bonds also occurs).</text>
        <dbReference type="EC" id="3.4.21.92"/>
    </reaction>
</comment>
<comment type="subunit">
    <text evidence="1">Fourteen ClpP subunits assemble into 2 heptameric rings which stack back to back to give a disk-like structure with a central cavity, resembling the structure of eukaryotic proteasomes.</text>
</comment>
<comment type="subcellular location">
    <subcellularLocation>
        <location evidence="1">Cytoplasm</location>
    </subcellularLocation>
</comment>
<comment type="similarity">
    <text evidence="1">Belongs to the peptidase S14 family.</text>
</comment>
<keyword id="KW-0963">Cytoplasm</keyword>
<keyword id="KW-0378">Hydrolase</keyword>
<keyword id="KW-0645">Protease</keyword>
<keyword id="KW-1185">Reference proteome</keyword>
<keyword id="KW-0720">Serine protease</keyword>
<organism>
    <name type="scientific">Helicobacter pylori (strain G27)</name>
    <dbReference type="NCBI Taxonomy" id="563041"/>
    <lineage>
        <taxon>Bacteria</taxon>
        <taxon>Pseudomonadati</taxon>
        <taxon>Campylobacterota</taxon>
        <taxon>Epsilonproteobacteria</taxon>
        <taxon>Campylobacterales</taxon>
        <taxon>Helicobacteraceae</taxon>
        <taxon>Helicobacter</taxon>
    </lineage>
</organism>
<gene>
    <name evidence="1" type="primary">clpP</name>
    <name type="ordered locus">HPG27_750</name>
</gene>